<organism>
    <name type="scientific">Leptospira interrogans serogroup Icterohaemorrhagiae serovar Lai (strain 56601)</name>
    <dbReference type="NCBI Taxonomy" id="189518"/>
    <lineage>
        <taxon>Bacteria</taxon>
        <taxon>Pseudomonadati</taxon>
        <taxon>Spirochaetota</taxon>
        <taxon>Spirochaetia</taxon>
        <taxon>Leptospirales</taxon>
        <taxon>Leptospiraceae</taxon>
        <taxon>Leptospira</taxon>
    </lineage>
</organism>
<comment type="function">
    <text evidence="1">Catalyzes two activities which are involved in the adenosylcobalamin biosynthesis: decarboxylates L-threonine-O-3-phosphate to yield (R)-1-amino-2-propanol O-2-phosphate, the precursor for the linkage between the nucleotide loop and the corrin ring in cobalamin, and catalyzes amidations at positions B, D, E, and G on adenosylcobyrinic A,C-diamide. NH(2) groups are provided by glutamine, and one molecule of ATP is hydrogenolyzed for each amidation (By similarity).</text>
</comment>
<comment type="catalytic activity">
    <reaction>
        <text>O-phospho-L-threonine + H(+) = (R)-1-aminopropan-2-yl phosphate + CO2</text>
        <dbReference type="Rhea" id="RHEA:11492"/>
        <dbReference type="ChEBI" id="CHEBI:15378"/>
        <dbReference type="ChEBI" id="CHEBI:16526"/>
        <dbReference type="ChEBI" id="CHEBI:58563"/>
        <dbReference type="ChEBI" id="CHEBI:58675"/>
        <dbReference type="EC" id="4.1.1.81"/>
    </reaction>
</comment>
<comment type="cofactor">
    <cofactor evidence="1">
        <name>pyridoxal 5'-phosphate</name>
        <dbReference type="ChEBI" id="CHEBI:597326"/>
    </cofactor>
</comment>
<comment type="pathway">
    <text>Cofactor biosynthesis; adenosylcobalamin biosynthesis.</text>
</comment>
<comment type="similarity">
    <text evidence="3">In the N-terminal section; belongs to the class-II pyridoxal-phosphate-dependent aminotransferase family.</text>
</comment>
<comment type="similarity">
    <text evidence="3">In the C-terminal section; belongs to the CobB/CobQ family. CobQ subfamily.</text>
</comment>
<sequence>MNLPEHGGNLIELSKKAGCNPKEILDFSANINPLGFPEWLRPFLHSKIEDLISYPDPNYTSLKKKIHSKYGICTEQIVLGNGASELILQIPFVVQADYALIAVPCYSGYKEAISLLKIPCIEVTLKEEKQFRLDINELRDVLKSKPDQKALVFLGHPNNPTGVTLDKIEVLKIVQEFQNSVFVIDESFIHFCTNESSFLKDKTENMILIQSMTKILALPGLRIGICYASPLICSNISKRLPTWNVNSIAASVYEKAISDEDYIENSKQNIKIWKEKLIYDLSNLEFLNLFSSEANFILIKILDNKNIFDLTQELLIKYKIAVRNCENFSGLSKNFIRIAVRTPEENKKIIDAFSNIFYGTRQRLKSRKKTPSIMFQGTASNVGKSILTAALCRILSQDGIKVAPFKSQNMALNSFVTLNGEEIGRAQALQAQAAKILPDIRMNPILLKPSNEKDSQVIINGKPLNSMNFKDYDQYKPIAFEEVKKSYDSLASEYNVIIIEGAGSASEVNLKKNDIVNMKMAEYAKADVLLVGNIDHGGLFGSLLGTMETLTEWERKLVFGFIINRFRGAKELLKTGINYIEEYTNKPILGIVPYIKNLKLPEEDSLEFKSGALDDTSKLEERLDVVLIDIPRISNHTDIDALRAEPDVRVRIVRTVEDLGEPDVLILPGSKNVISDLNHLYDVGLVNKIFALSRNQKTDIVGICGGYQMLGKNIFDPYRIESDQGSIQGISLLQIETILEKNKSLKRVFATHIPTKTEVEGYEIHHGKTKSIGNTRVILLNEKAEELGHSDPTGRIWGTYIHGIFDKDEFRRKYLDQIRIRKGKSPLVKVQVSYNLEKSLDRLARYVRQSLNINLIYRKLGLG</sequence>
<name>COBDQ_LEPIN</name>
<accession>Q8EXQ7</accession>
<evidence type="ECO:0000250" key="1"/>
<evidence type="ECO:0000250" key="2">
    <source>
        <dbReference type="UniProtKB" id="P97084"/>
    </source>
</evidence>
<evidence type="ECO:0000305" key="3"/>
<dbReference type="EC" id="4.1.1.81"/>
<dbReference type="EMBL" id="AE010301">
    <property type="protein sequence ID" value="AAN51710.2"/>
    <property type="molecule type" value="Genomic_DNA"/>
</dbReference>
<dbReference type="RefSeq" id="NP_714695.2">
    <property type="nucleotide sequence ID" value="NC_004343.2"/>
</dbReference>
<dbReference type="RefSeq" id="WP_001052877.1">
    <property type="nucleotide sequence ID" value="NC_004343.2"/>
</dbReference>
<dbReference type="SMR" id="Q8EXQ7"/>
<dbReference type="STRING" id="189518.LB_151"/>
<dbReference type="PaxDb" id="189518-LB_151"/>
<dbReference type="EnsemblBacteria" id="AAN51710">
    <property type="protein sequence ID" value="AAN51710"/>
    <property type="gene ID" value="LB_151"/>
</dbReference>
<dbReference type="KEGG" id="lil:LB_151"/>
<dbReference type="PATRIC" id="fig|189518.3.peg.4479"/>
<dbReference type="HOGENOM" id="CLU_013947_2_1_12"/>
<dbReference type="InParanoid" id="Q8EXQ7"/>
<dbReference type="OrthoDB" id="9808302at2"/>
<dbReference type="UniPathway" id="UPA00148"/>
<dbReference type="Proteomes" id="UP000001408">
    <property type="component" value="Chromosome II"/>
</dbReference>
<dbReference type="GO" id="GO:0015420">
    <property type="term" value="F:ABC-type vitamin B12 transporter activity"/>
    <property type="evidence" value="ECO:0007669"/>
    <property type="project" value="UniProtKB-UniRule"/>
</dbReference>
<dbReference type="GO" id="GO:0030170">
    <property type="term" value="F:pyridoxal phosphate binding"/>
    <property type="evidence" value="ECO:0007669"/>
    <property type="project" value="InterPro"/>
</dbReference>
<dbReference type="GO" id="GO:0048472">
    <property type="term" value="F:threonine-phosphate decarboxylase activity"/>
    <property type="evidence" value="ECO:0007669"/>
    <property type="project" value="UniProtKB-EC"/>
</dbReference>
<dbReference type="GO" id="GO:0009236">
    <property type="term" value="P:cobalamin biosynthetic process"/>
    <property type="evidence" value="ECO:0007669"/>
    <property type="project" value="UniProtKB-UniRule"/>
</dbReference>
<dbReference type="CDD" id="cd00609">
    <property type="entry name" value="AAT_like"/>
    <property type="match status" value="1"/>
</dbReference>
<dbReference type="CDD" id="cd05389">
    <property type="entry name" value="CobQ_N"/>
    <property type="match status" value="1"/>
</dbReference>
<dbReference type="CDD" id="cd01750">
    <property type="entry name" value="GATase1_CobQ"/>
    <property type="match status" value="1"/>
</dbReference>
<dbReference type="Gene3D" id="3.40.50.880">
    <property type="match status" value="1"/>
</dbReference>
<dbReference type="Gene3D" id="3.90.1150.10">
    <property type="entry name" value="Aspartate Aminotransferase, domain 1"/>
    <property type="match status" value="1"/>
</dbReference>
<dbReference type="Gene3D" id="3.40.50.300">
    <property type="entry name" value="P-loop containing nucleotide triphosphate hydrolases"/>
    <property type="match status" value="1"/>
</dbReference>
<dbReference type="Gene3D" id="3.40.640.10">
    <property type="entry name" value="Type I PLP-dependent aspartate aminotransferase-like (Major domain)"/>
    <property type="match status" value="1"/>
</dbReference>
<dbReference type="HAMAP" id="MF_00028">
    <property type="entry name" value="CobQ"/>
    <property type="match status" value="1"/>
</dbReference>
<dbReference type="InterPro" id="IPR004839">
    <property type="entry name" value="Aminotransferase_I/II_large"/>
</dbReference>
<dbReference type="InterPro" id="IPR029062">
    <property type="entry name" value="Class_I_gatase-like"/>
</dbReference>
<dbReference type="InterPro" id="IPR002586">
    <property type="entry name" value="CobQ/CobB/MinD/ParA_Nub-bd_dom"/>
</dbReference>
<dbReference type="InterPro" id="IPR033949">
    <property type="entry name" value="CobQ_GATase1"/>
</dbReference>
<dbReference type="InterPro" id="IPR047045">
    <property type="entry name" value="CobQ_N"/>
</dbReference>
<dbReference type="InterPro" id="IPR004459">
    <property type="entry name" value="CobQ_synth"/>
</dbReference>
<dbReference type="InterPro" id="IPR011698">
    <property type="entry name" value="GATase_3"/>
</dbReference>
<dbReference type="InterPro" id="IPR004838">
    <property type="entry name" value="NHTrfase_class1_PyrdxlP-BS"/>
</dbReference>
<dbReference type="InterPro" id="IPR027417">
    <property type="entry name" value="P-loop_NTPase"/>
</dbReference>
<dbReference type="InterPro" id="IPR015424">
    <property type="entry name" value="PyrdxlP-dep_Trfase"/>
</dbReference>
<dbReference type="InterPro" id="IPR015421">
    <property type="entry name" value="PyrdxlP-dep_Trfase_major"/>
</dbReference>
<dbReference type="InterPro" id="IPR015422">
    <property type="entry name" value="PyrdxlP-dep_Trfase_small"/>
</dbReference>
<dbReference type="NCBIfam" id="TIGR00313">
    <property type="entry name" value="cobQ"/>
    <property type="match status" value="1"/>
</dbReference>
<dbReference type="NCBIfam" id="NF001989">
    <property type="entry name" value="PRK00784.1"/>
    <property type="match status" value="1"/>
</dbReference>
<dbReference type="PANTHER" id="PTHR21343:SF1">
    <property type="entry name" value="COBYRIC ACID SYNTHASE"/>
    <property type="match status" value="1"/>
</dbReference>
<dbReference type="PANTHER" id="PTHR21343">
    <property type="entry name" value="DETHIOBIOTIN SYNTHETASE"/>
    <property type="match status" value="1"/>
</dbReference>
<dbReference type="Pfam" id="PF00155">
    <property type="entry name" value="Aminotran_1_2"/>
    <property type="match status" value="1"/>
</dbReference>
<dbReference type="Pfam" id="PF01656">
    <property type="entry name" value="CbiA"/>
    <property type="match status" value="1"/>
</dbReference>
<dbReference type="Pfam" id="PF07685">
    <property type="entry name" value="GATase_3"/>
    <property type="match status" value="1"/>
</dbReference>
<dbReference type="SUPFAM" id="SSF52317">
    <property type="entry name" value="Class I glutamine amidotransferase-like"/>
    <property type="match status" value="1"/>
</dbReference>
<dbReference type="SUPFAM" id="SSF52540">
    <property type="entry name" value="P-loop containing nucleoside triphosphate hydrolases"/>
    <property type="match status" value="1"/>
</dbReference>
<dbReference type="SUPFAM" id="SSF53383">
    <property type="entry name" value="PLP-dependent transferases"/>
    <property type="match status" value="1"/>
</dbReference>
<dbReference type="PROSITE" id="PS00105">
    <property type="entry name" value="AA_TRANSFER_CLASS_1"/>
    <property type="match status" value="1"/>
</dbReference>
<dbReference type="PROSITE" id="PS51274">
    <property type="entry name" value="GATASE_COBBQ"/>
    <property type="match status" value="1"/>
</dbReference>
<gene>
    <name type="primary">cobDQ</name>
    <name type="ordered locus">LB_151</name>
</gene>
<keyword id="KW-0169">Cobalamin biosynthesis</keyword>
<keyword id="KW-0315">Glutamine amidotransferase</keyword>
<keyword id="KW-0456">Lyase</keyword>
<keyword id="KW-0511">Multifunctional enzyme</keyword>
<keyword id="KW-0663">Pyridoxal phosphate</keyword>
<keyword id="KW-1185">Reference proteome</keyword>
<feature type="chain" id="PRO_0000141305" description="Adenosylcobalamin biosynthesis bifunctional protein CobDQ">
    <location>
        <begin position="1"/>
        <end position="863"/>
    </location>
</feature>
<feature type="domain" description="GATase cobBQ-type">
    <location>
        <begin position="622"/>
        <end position="810"/>
    </location>
</feature>
<feature type="region of interest" description="Putative threonine-phosphate decarboxylase">
    <location>
        <begin position="1"/>
        <end position="373"/>
    </location>
</feature>
<feature type="region of interest" description="Cobyric acid synthase">
    <location>
        <begin position="374"/>
        <end position="863"/>
    </location>
</feature>
<feature type="active site" description="Nucleophile" evidence="1">
    <location>
        <position position="704"/>
    </location>
</feature>
<feature type="active site" evidence="1">
    <location>
        <position position="802"/>
    </location>
</feature>
<feature type="binding site" evidence="2">
    <location>
        <begin position="6"/>
        <end position="7"/>
    </location>
    <ligand>
        <name>O-phospho-L-threonine</name>
        <dbReference type="ChEBI" id="CHEBI:58675"/>
    </ligand>
</feature>
<feature type="binding site" evidence="2">
    <location>
        <position position="30"/>
    </location>
    <ligand>
        <name>O-phospho-L-threonine</name>
        <dbReference type="ChEBI" id="CHEBI:58675"/>
    </ligand>
</feature>
<feature type="binding site" evidence="2">
    <location>
        <position position="159"/>
    </location>
    <ligand>
        <name>O-phospho-L-threonine</name>
        <dbReference type="ChEBI" id="CHEBI:58675"/>
    </ligand>
</feature>
<feature type="binding site" evidence="2">
    <location>
        <position position="323"/>
    </location>
    <ligand>
        <name>O-phospho-L-threonine</name>
        <dbReference type="ChEBI" id="CHEBI:58675"/>
    </ligand>
</feature>
<feature type="binding site" evidence="2">
    <location>
        <position position="337"/>
    </location>
    <ligand>
        <name>O-phospho-L-threonine</name>
        <dbReference type="ChEBI" id="CHEBI:58675"/>
    </ligand>
</feature>
<feature type="modified residue" description="N6-(pyridoxal phosphate)lysine" evidence="2">
    <location>
        <position position="214"/>
    </location>
</feature>
<proteinExistence type="inferred from homology"/>
<protein>
    <recommendedName>
        <fullName>Adenosylcobalamin biosynthesis bifunctional protein CobDQ</fullName>
    </recommendedName>
    <domain>
        <recommendedName>
            <fullName>Putative threonine-phosphate decarboxylase</fullName>
            <ecNumber>4.1.1.81</ecNumber>
        </recommendedName>
        <alternativeName>
            <fullName>L-threonine-O-3-phosphate decarboxylase</fullName>
        </alternativeName>
    </domain>
    <domain>
        <recommendedName>
            <fullName>Cobyric acid synthase</fullName>
        </recommendedName>
    </domain>
</protein>
<reference key="1">
    <citation type="journal article" date="2003" name="Nature">
        <title>Unique physiological and pathogenic features of Leptospira interrogans revealed by whole-genome sequencing.</title>
        <authorList>
            <person name="Ren S.-X."/>
            <person name="Fu G."/>
            <person name="Jiang X.-G."/>
            <person name="Zeng R."/>
            <person name="Miao Y.-G."/>
            <person name="Xu H."/>
            <person name="Zhang Y.-X."/>
            <person name="Xiong H."/>
            <person name="Lu G."/>
            <person name="Lu L.-F."/>
            <person name="Jiang H.-Q."/>
            <person name="Jia J."/>
            <person name="Tu Y.-F."/>
            <person name="Jiang J.-X."/>
            <person name="Gu W.-Y."/>
            <person name="Zhang Y.-Q."/>
            <person name="Cai Z."/>
            <person name="Sheng H.-H."/>
            <person name="Yin H.-F."/>
            <person name="Zhang Y."/>
            <person name="Zhu G.-F."/>
            <person name="Wan M."/>
            <person name="Huang H.-L."/>
            <person name="Qian Z."/>
            <person name="Wang S.-Y."/>
            <person name="Ma W."/>
            <person name="Yao Z.-J."/>
            <person name="Shen Y."/>
            <person name="Qiang B.-Q."/>
            <person name="Xia Q.-C."/>
            <person name="Guo X.-K."/>
            <person name="Danchin A."/>
            <person name="Saint Girons I."/>
            <person name="Somerville R.L."/>
            <person name="Wen Y.-M."/>
            <person name="Shi M.-H."/>
            <person name="Chen Z."/>
            <person name="Xu J.-G."/>
            <person name="Zhao G.-P."/>
        </authorList>
    </citation>
    <scope>NUCLEOTIDE SEQUENCE [LARGE SCALE GENOMIC DNA]</scope>
    <source>
        <strain>56601</strain>
    </source>
</reference>
<reference key="2">
    <citation type="submission" date="2010-04" db="EMBL/GenBank/DDBJ databases">
        <authorList>
            <person name="Zhong Y."/>
            <person name="Zheng H.-J."/>
            <person name="Wang S.-Y."/>
            <person name="Guo X.-K."/>
            <person name="Zhao G.-P."/>
        </authorList>
    </citation>
    <scope>SEQUENCE REVISION</scope>
</reference>